<name>RS18_CAMFF</name>
<organism>
    <name type="scientific">Campylobacter fetus subsp. fetus (strain 82-40)</name>
    <dbReference type="NCBI Taxonomy" id="360106"/>
    <lineage>
        <taxon>Bacteria</taxon>
        <taxon>Pseudomonadati</taxon>
        <taxon>Campylobacterota</taxon>
        <taxon>Epsilonproteobacteria</taxon>
        <taxon>Campylobacterales</taxon>
        <taxon>Campylobacteraceae</taxon>
        <taxon>Campylobacter</taxon>
    </lineage>
</organism>
<gene>
    <name evidence="1" type="primary">rpsR</name>
    <name type="ordered locus">CFF8240_1133</name>
</gene>
<dbReference type="EMBL" id="CP000487">
    <property type="protein sequence ID" value="ABK83198.1"/>
    <property type="molecule type" value="Genomic_DNA"/>
</dbReference>
<dbReference type="RefSeq" id="WP_002849757.1">
    <property type="nucleotide sequence ID" value="NC_008599.1"/>
</dbReference>
<dbReference type="SMR" id="A0RQ08"/>
<dbReference type="GeneID" id="61064958"/>
<dbReference type="KEGG" id="cff:CFF8240_1133"/>
<dbReference type="eggNOG" id="COG0238">
    <property type="taxonomic scope" value="Bacteria"/>
</dbReference>
<dbReference type="HOGENOM" id="CLU_148710_2_2_7"/>
<dbReference type="Proteomes" id="UP000000760">
    <property type="component" value="Chromosome"/>
</dbReference>
<dbReference type="GO" id="GO:0022627">
    <property type="term" value="C:cytosolic small ribosomal subunit"/>
    <property type="evidence" value="ECO:0007669"/>
    <property type="project" value="TreeGrafter"/>
</dbReference>
<dbReference type="GO" id="GO:0070181">
    <property type="term" value="F:small ribosomal subunit rRNA binding"/>
    <property type="evidence" value="ECO:0007669"/>
    <property type="project" value="TreeGrafter"/>
</dbReference>
<dbReference type="GO" id="GO:0003735">
    <property type="term" value="F:structural constituent of ribosome"/>
    <property type="evidence" value="ECO:0007669"/>
    <property type="project" value="InterPro"/>
</dbReference>
<dbReference type="GO" id="GO:0006412">
    <property type="term" value="P:translation"/>
    <property type="evidence" value="ECO:0007669"/>
    <property type="project" value="UniProtKB-UniRule"/>
</dbReference>
<dbReference type="FunFam" id="4.10.640.10:FF:000005">
    <property type="entry name" value="30S ribosomal protein S18"/>
    <property type="match status" value="1"/>
</dbReference>
<dbReference type="Gene3D" id="4.10.640.10">
    <property type="entry name" value="Ribosomal protein S18"/>
    <property type="match status" value="1"/>
</dbReference>
<dbReference type="HAMAP" id="MF_00270">
    <property type="entry name" value="Ribosomal_bS18"/>
    <property type="match status" value="1"/>
</dbReference>
<dbReference type="InterPro" id="IPR001648">
    <property type="entry name" value="Ribosomal_bS18"/>
</dbReference>
<dbReference type="InterPro" id="IPR036870">
    <property type="entry name" value="Ribosomal_bS18_sf"/>
</dbReference>
<dbReference type="NCBIfam" id="TIGR00165">
    <property type="entry name" value="S18"/>
    <property type="match status" value="1"/>
</dbReference>
<dbReference type="PANTHER" id="PTHR13479">
    <property type="entry name" value="30S RIBOSOMAL PROTEIN S18"/>
    <property type="match status" value="1"/>
</dbReference>
<dbReference type="PANTHER" id="PTHR13479:SF40">
    <property type="entry name" value="SMALL RIBOSOMAL SUBUNIT PROTEIN BS18M"/>
    <property type="match status" value="1"/>
</dbReference>
<dbReference type="Pfam" id="PF01084">
    <property type="entry name" value="Ribosomal_S18"/>
    <property type="match status" value="1"/>
</dbReference>
<dbReference type="PRINTS" id="PR00974">
    <property type="entry name" value="RIBOSOMALS18"/>
</dbReference>
<dbReference type="SUPFAM" id="SSF46911">
    <property type="entry name" value="Ribosomal protein S18"/>
    <property type="match status" value="1"/>
</dbReference>
<accession>A0RQ08</accession>
<reference key="1">
    <citation type="submission" date="2006-11" db="EMBL/GenBank/DDBJ databases">
        <title>Sequence of Campylobacter fetus subsp. fetus 82-40.</title>
        <authorList>
            <person name="Fouts D.E."/>
            <person name="Nelson K.E."/>
        </authorList>
    </citation>
    <scope>NUCLEOTIDE SEQUENCE [LARGE SCALE GENOMIC DNA]</scope>
    <source>
        <strain>82-40</strain>
    </source>
</reference>
<proteinExistence type="inferred from homology"/>
<comment type="function">
    <text evidence="1">Binds as a heterodimer with protein bS6 to the central domain of the 16S rRNA, where it helps stabilize the platform of the 30S subunit.</text>
</comment>
<comment type="subunit">
    <text evidence="1">Part of the 30S ribosomal subunit. Forms a tight heterodimer with protein bS6.</text>
</comment>
<comment type="similarity">
    <text evidence="1">Belongs to the bacterial ribosomal protein bS18 family.</text>
</comment>
<sequence>MAEKRKYSKKYCKYTEAKVEFIDYKDTTLLKYCLSERFKIMPRRLTGTSKKYQEMVEKAIKRARHVALIPYIVDRDNVVTNPFEGM</sequence>
<evidence type="ECO:0000255" key="1">
    <source>
        <dbReference type="HAMAP-Rule" id="MF_00270"/>
    </source>
</evidence>
<evidence type="ECO:0000305" key="2"/>
<keyword id="KW-0687">Ribonucleoprotein</keyword>
<keyword id="KW-0689">Ribosomal protein</keyword>
<keyword id="KW-0694">RNA-binding</keyword>
<keyword id="KW-0699">rRNA-binding</keyword>
<protein>
    <recommendedName>
        <fullName evidence="1">Small ribosomal subunit protein bS18</fullName>
    </recommendedName>
    <alternativeName>
        <fullName evidence="2">30S ribosomal protein S18</fullName>
    </alternativeName>
</protein>
<feature type="chain" id="PRO_1000003472" description="Small ribosomal subunit protein bS18">
    <location>
        <begin position="1"/>
        <end position="86"/>
    </location>
</feature>